<name>PA2HA_BOTAS</name>
<evidence type="ECO:0000250" key="1">
    <source>
        <dbReference type="UniProtKB" id="I6L8L6"/>
    </source>
</evidence>
<evidence type="ECO:0000250" key="2">
    <source>
        <dbReference type="UniProtKB" id="P24605"/>
    </source>
</evidence>
<evidence type="ECO:0000250" key="3">
    <source>
        <dbReference type="UniProtKB" id="Q90249"/>
    </source>
</evidence>
<evidence type="ECO:0000269" key="4">
    <source>
    </source>
</evidence>
<evidence type="ECO:0000303" key="5">
    <source>
    </source>
</evidence>
<evidence type="ECO:0000305" key="6"/>
<evidence type="ECO:0000305" key="7">
    <source>
    </source>
</evidence>
<protein>
    <recommendedName>
        <fullName>Basic phospholipase A2 homolog 4a</fullName>
        <shortName>svPLA2 homolog</shortName>
    </recommendedName>
    <alternativeName>
        <fullName evidence="5">Myotoxin IVa</fullName>
        <shortName evidence="5">MT-IVa</shortName>
    </alternativeName>
</protein>
<keyword id="KW-0903">Direct protein sequencing</keyword>
<keyword id="KW-1015">Disulfide bond</keyword>
<keyword id="KW-0959">Myotoxin</keyword>
<keyword id="KW-0964">Secreted</keyword>
<keyword id="KW-0732">Signal</keyword>
<keyword id="KW-0800">Toxin</keyword>
<organism>
    <name type="scientific">Bothrops asper</name>
    <name type="common">Terciopelo</name>
    <dbReference type="NCBI Taxonomy" id="8722"/>
    <lineage>
        <taxon>Eukaryota</taxon>
        <taxon>Metazoa</taxon>
        <taxon>Chordata</taxon>
        <taxon>Craniata</taxon>
        <taxon>Vertebrata</taxon>
        <taxon>Euteleostomi</taxon>
        <taxon>Lepidosauria</taxon>
        <taxon>Squamata</taxon>
        <taxon>Bifurcata</taxon>
        <taxon>Unidentata</taxon>
        <taxon>Episquamata</taxon>
        <taxon>Toxicofera</taxon>
        <taxon>Serpentes</taxon>
        <taxon>Colubroidea</taxon>
        <taxon>Viperidae</taxon>
        <taxon>Crotalinae</taxon>
        <taxon>Bothrops</taxon>
    </lineage>
</organism>
<feature type="signal peptide">
    <location>
        <begin position="1"/>
        <end position="16"/>
    </location>
</feature>
<feature type="chain" id="PRO_0000314776" description="Basic phospholipase A2 homolog 4a">
    <location>
        <begin position="17"/>
        <end position="137"/>
    </location>
</feature>
<feature type="region of interest" description="Important for membrane-damaging activities in eukaryotes and bacteria; heparin-binding" evidence="2">
    <location>
        <begin position="121"/>
        <end position="133"/>
    </location>
</feature>
<feature type="site" description="Important residue of the cationic membrane-docking site (MDoS)" evidence="1">
    <location>
        <position position="121"/>
    </location>
</feature>
<feature type="site" description="Important residue of the cationic membrane-docking site (MDoS)" evidence="1">
    <location>
        <position position="124"/>
    </location>
</feature>
<feature type="site" description="Cationic membrane-docking site (MDoS)" evidence="1">
    <location>
        <position position="128"/>
    </location>
</feature>
<feature type="site" description="Hydrophobic membrane-disruption site (MDiS)" evidence="1">
    <location>
        <position position="130"/>
    </location>
</feature>
<feature type="site" description="Cationic membrane-docking site (MDoS)" evidence="1">
    <location>
        <position position="133"/>
    </location>
</feature>
<feature type="disulfide bond" evidence="3">
    <location>
        <begin position="42"/>
        <end position="131"/>
    </location>
</feature>
<feature type="disulfide bond" evidence="3">
    <location>
        <begin position="44"/>
        <end position="60"/>
    </location>
</feature>
<feature type="disulfide bond" evidence="3">
    <location>
        <begin position="59"/>
        <end position="111"/>
    </location>
</feature>
<feature type="disulfide bond" evidence="3">
    <location>
        <begin position="65"/>
        <end position="137"/>
    </location>
</feature>
<feature type="disulfide bond" evidence="3">
    <location>
        <begin position="66"/>
        <end position="104"/>
    </location>
</feature>
<feature type="disulfide bond" evidence="3">
    <location>
        <begin position="73"/>
        <end position="97"/>
    </location>
</feature>
<feature type="disulfide bond" evidence="3">
    <location>
        <begin position="91"/>
        <end position="102"/>
    </location>
</feature>
<reference key="1">
    <citation type="journal article" date="2001" name="Int. J. Biochem. Cell Biol.">
        <title>Cloning and cDNA sequence analysis of Lys(49) and Asp(49) basic phospholipase A(2) myotoxin isoforms from Bothrops asper.</title>
        <authorList>
            <person name="Lizano S."/>
            <person name="Lambeau G."/>
            <person name="Lazdunski M."/>
        </authorList>
    </citation>
    <scope>NUCLEOTIDE SEQUENCE [MRNA]</scope>
    <scope>PARTIAL PROTEIN SEQUENCE</scope>
    <scope>SUBCELLULAR LOCATION</scope>
    <source>
        <tissue>Venom</tissue>
        <tissue>Venom gland</tissue>
    </source>
</reference>
<dbReference type="EMBL" id="EU336943">
    <property type="protein sequence ID" value="ABY55159.1"/>
    <property type="molecule type" value="mRNA"/>
</dbReference>
<dbReference type="SMR" id="P0C616"/>
<dbReference type="GO" id="GO:0005576">
    <property type="term" value="C:extracellular region"/>
    <property type="evidence" value="ECO:0007669"/>
    <property type="project" value="UniProtKB-SubCell"/>
</dbReference>
<dbReference type="GO" id="GO:0005509">
    <property type="term" value="F:calcium ion binding"/>
    <property type="evidence" value="ECO:0007669"/>
    <property type="project" value="InterPro"/>
</dbReference>
<dbReference type="GO" id="GO:0047498">
    <property type="term" value="F:calcium-dependent phospholipase A2 activity"/>
    <property type="evidence" value="ECO:0007669"/>
    <property type="project" value="TreeGrafter"/>
</dbReference>
<dbReference type="GO" id="GO:0005543">
    <property type="term" value="F:phospholipid binding"/>
    <property type="evidence" value="ECO:0007669"/>
    <property type="project" value="TreeGrafter"/>
</dbReference>
<dbReference type="GO" id="GO:0090729">
    <property type="term" value="F:toxin activity"/>
    <property type="evidence" value="ECO:0007669"/>
    <property type="project" value="UniProtKB-KW"/>
</dbReference>
<dbReference type="GO" id="GO:0050482">
    <property type="term" value="P:arachidonate secretion"/>
    <property type="evidence" value="ECO:0007669"/>
    <property type="project" value="InterPro"/>
</dbReference>
<dbReference type="GO" id="GO:0016042">
    <property type="term" value="P:lipid catabolic process"/>
    <property type="evidence" value="ECO:0007669"/>
    <property type="project" value="InterPro"/>
</dbReference>
<dbReference type="GO" id="GO:0042130">
    <property type="term" value="P:negative regulation of T cell proliferation"/>
    <property type="evidence" value="ECO:0007669"/>
    <property type="project" value="TreeGrafter"/>
</dbReference>
<dbReference type="GO" id="GO:0006644">
    <property type="term" value="P:phospholipid metabolic process"/>
    <property type="evidence" value="ECO:0007669"/>
    <property type="project" value="InterPro"/>
</dbReference>
<dbReference type="CDD" id="cd00125">
    <property type="entry name" value="PLA2c"/>
    <property type="match status" value="1"/>
</dbReference>
<dbReference type="FunFam" id="1.20.90.10:FF:000001">
    <property type="entry name" value="Basic phospholipase A2 homolog"/>
    <property type="match status" value="1"/>
</dbReference>
<dbReference type="Gene3D" id="1.20.90.10">
    <property type="entry name" value="Phospholipase A2 domain"/>
    <property type="match status" value="1"/>
</dbReference>
<dbReference type="InterPro" id="IPR001211">
    <property type="entry name" value="PLipase_A2"/>
</dbReference>
<dbReference type="InterPro" id="IPR033112">
    <property type="entry name" value="PLipase_A2_Asp_AS"/>
</dbReference>
<dbReference type="InterPro" id="IPR016090">
    <property type="entry name" value="PLipase_A2_dom"/>
</dbReference>
<dbReference type="InterPro" id="IPR036444">
    <property type="entry name" value="PLipase_A2_dom_sf"/>
</dbReference>
<dbReference type="InterPro" id="IPR033113">
    <property type="entry name" value="PLipase_A2_His_AS"/>
</dbReference>
<dbReference type="PANTHER" id="PTHR11716">
    <property type="entry name" value="PHOSPHOLIPASE A2 FAMILY MEMBER"/>
    <property type="match status" value="1"/>
</dbReference>
<dbReference type="PANTHER" id="PTHR11716:SF9">
    <property type="entry name" value="PHOSPHOLIPASE A2, MEMBRANE ASSOCIATED"/>
    <property type="match status" value="1"/>
</dbReference>
<dbReference type="Pfam" id="PF00068">
    <property type="entry name" value="Phospholip_A2_1"/>
    <property type="match status" value="1"/>
</dbReference>
<dbReference type="PRINTS" id="PR00389">
    <property type="entry name" value="PHPHLIPASEA2"/>
</dbReference>
<dbReference type="SMART" id="SM00085">
    <property type="entry name" value="PA2c"/>
    <property type="match status" value="1"/>
</dbReference>
<dbReference type="SUPFAM" id="SSF48619">
    <property type="entry name" value="Phospholipase A2, PLA2"/>
    <property type="match status" value="1"/>
</dbReference>
<dbReference type="PROSITE" id="PS00119">
    <property type="entry name" value="PA2_ASP"/>
    <property type="match status" value="1"/>
</dbReference>
<dbReference type="PROSITE" id="PS00118">
    <property type="entry name" value="PA2_HIS"/>
    <property type="match status" value="1"/>
</dbReference>
<accession>P0C616</accession>
<accession>B0FM89</accession>
<proteinExistence type="evidence at protein level"/>
<comment type="function">
    <text evidence="1 3">Snake venom phospholipase A2 homolog that lacks enzymatic activity (By similarity). Is myotoxic and displays edema-inducing activities (By similarity). A model of myotoxic mechanism has been proposed: an apo Lys49-PLA2 is activated by the entrance of a hydrophobic molecule (e.g. fatty acid) at the hydrophobic channel of the protein leading to a reorientation of a monomer (By similarity). This reorientation causes a transition between 'inactive' to 'active' states, causing alignment of C-terminal and membrane-docking sites (MDoS) side-by-side and putting the membrane-disruption sites (MDiS) in the same plane, exposed to solvent and in a symmetric position for both monomers (By similarity). The MDoS region stabilizes the toxin on membrane by the interaction of charged residues with phospholipid head groups (By similarity). Subsequently, the MDiS region destabilizes the membrane with penetration of hydrophobic residues (By similarity). This insertion causes a disorganization of the membrane, allowing an uncontrolled influx of ions (i.e. calcium and sodium), and eventually triggering irreversible intracellular alterations and cell death (By similarity).</text>
</comment>
<comment type="subunit">
    <text evidence="3">Homodimer; non-covalently linked.</text>
</comment>
<comment type="subcellular location">
    <subcellularLocation>
        <location evidence="4">Secreted</location>
    </subcellularLocation>
</comment>
<comment type="tissue specificity">
    <text evidence="7">Expressed by the venom gland.</text>
</comment>
<comment type="similarity">
    <text evidence="6">Belongs to the phospholipase A2 family. Group II subfamily. K49 sub-subfamily.</text>
</comment>
<comment type="caution">
    <text evidence="6">Does not bind calcium as three of the calcium binding ligands are lost.</text>
</comment>
<sequence length="137" mass="15688">MRTLWIVTVLLVGVEGSLVELGKMILQETGKNPLTSYGVYGCNCGVGGRHKPKDGTDRCCYVHKCCYKKMTDCDPKKDRYSYSWKDKTIVCDENNPCLKELCECDKAVAICLRENLDTYNKKYKIYPKFFCKKAEPC</sequence>